<keyword id="KW-0030">Aminoacyl-tRNA synthetase</keyword>
<keyword id="KW-0067">ATP-binding</keyword>
<keyword id="KW-0963">Cytoplasm</keyword>
<keyword id="KW-0436">Ligase</keyword>
<keyword id="KW-0547">Nucleotide-binding</keyword>
<keyword id="KW-0648">Protein biosynthesis</keyword>
<keyword id="KW-1185">Reference proteome</keyword>
<dbReference type="EC" id="6.1.1.4" evidence="1"/>
<dbReference type="EMBL" id="CP001339">
    <property type="protein sequence ID" value="ACL73359.1"/>
    <property type="molecule type" value="Genomic_DNA"/>
</dbReference>
<dbReference type="RefSeq" id="WP_012638835.1">
    <property type="nucleotide sequence ID" value="NC_011901.1"/>
</dbReference>
<dbReference type="SMR" id="B8GV13"/>
<dbReference type="STRING" id="396588.Tgr7_2279"/>
<dbReference type="KEGG" id="tgr:Tgr7_2279"/>
<dbReference type="eggNOG" id="COG0495">
    <property type="taxonomic scope" value="Bacteria"/>
</dbReference>
<dbReference type="HOGENOM" id="CLU_004427_0_0_6"/>
<dbReference type="OrthoDB" id="9810365at2"/>
<dbReference type="Proteomes" id="UP000002383">
    <property type="component" value="Chromosome"/>
</dbReference>
<dbReference type="GO" id="GO:0005829">
    <property type="term" value="C:cytosol"/>
    <property type="evidence" value="ECO:0007669"/>
    <property type="project" value="TreeGrafter"/>
</dbReference>
<dbReference type="GO" id="GO:0002161">
    <property type="term" value="F:aminoacyl-tRNA deacylase activity"/>
    <property type="evidence" value="ECO:0007669"/>
    <property type="project" value="InterPro"/>
</dbReference>
<dbReference type="GO" id="GO:0005524">
    <property type="term" value="F:ATP binding"/>
    <property type="evidence" value="ECO:0007669"/>
    <property type="project" value="UniProtKB-UniRule"/>
</dbReference>
<dbReference type="GO" id="GO:0004823">
    <property type="term" value="F:leucine-tRNA ligase activity"/>
    <property type="evidence" value="ECO:0007669"/>
    <property type="project" value="UniProtKB-UniRule"/>
</dbReference>
<dbReference type="GO" id="GO:0006429">
    <property type="term" value="P:leucyl-tRNA aminoacylation"/>
    <property type="evidence" value="ECO:0007669"/>
    <property type="project" value="UniProtKB-UniRule"/>
</dbReference>
<dbReference type="CDD" id="cd07958">
    <property type="entry name" value="Anticodon_Ia_Leu_BEm"/>
    <property type="match status" value="1"/>
</dbReference>
<dbReference type="CDD" id="cd00812">
    <property type="entry name" value="LeuRS_core"/>
    <property type="match status" value="1"/>
</dbReference>
<dbReference type="FunFam" id="1.10.730.10:FF:000003">
    <property type="entry name" value="Leucine--tRNA ligase"/>
    <property type="match status" value="1"/>
</dbReference>
<dbReference type="FunFam" id="3.10.20.590:FF:000001">
    <property type="entry name" value="Leucine--tRNA ligase"/>
    <property type="match status" value="1"/>
</dbReference>
<dbReference type="FunFam" id="3.40.50.620:FF:000124">
    <property type="entry name" value="Leucine--tRNA ligase"/>
    <property type="match status" value="1"/>
</dbReference>
<dbReference type="FunFam" id="3.40.50.620:FF:000395">
    <property type="entry name" value="Leucine--tRNA ligase"/>
    <property type="match status" value="1"/>
</dbReference>
<dbReference type="FunFam" id="3.90.740.10:FF:000012">
    <property type="entry name" value="Leucine--tRNA ligase"/>
    <property type="match status" value="1"/>
</dbReference>
<dbReference type="Gene3D" id="3.10.20.590">
    <property type="match status" value="1"/>
</dbReference>
<dbReference type="Gene3D" id="3.40.50.620">
    <property type="entry name" value="HUPs"/>
    <property type="match status" value="2"/>
</dbReference>
<dbReference type="Gene3D" id="1.10.730.10">
    <property type="entry name" value="Isoleucyl-tRNA Synthetase, Domain 1"/>
    <property type="match status" value="1"/>
</dbReference>
<dbReference type="Gene3D" id="3.90.740.10">
    <property type="entry name" value="Valyl/Leucyl/Isoleucyl-tRNA synthetase, editing domain"/>
    <property type="match status" value="1"/>
</dbReference>
<dbReference type="HAMAP" id="MF_00049_B">
    <property type="entry name" value="Leu_tRNA_synth_B"/>
    <property type="match status" value="1"/>
</dbReference>
<dbReference type="InterPro" id="IPR001412">
    <property type="entry name" value="aa-tRNA-synth_I_CS"/>
</dbReference>
<dbReference type="InterPro" id="IPR002300">
    <property type="entry name" value="aa-tRNA-synth_Ia"/>
</dbReference>
<dbReference type="InterPro" id="IPR002302">
    <property type="entry name" value="Leu-tRNA-ligase"/>
</dbReference>
<dbReference type="InterPro" id="IPR025709">
    <property type="entry name" value="Leu_tRNA-synth_edit"/>
</dbReference>
<dbReference type="InterPro" id="IPR013155">
    <property type="entry name" value="M/V/L/I-tRNA-synth_anticd-bd"/>
</dbReference>
<dbReference type="InterPro" id="IPR015413">
    <property type="entry name" value="Methionyl/Leucyl_tRNA_Synth"/>
</dbReference>
<dbReference type="InterPro" id="IPR014729">
    <property type="entry name" value="Rossmann-like_a/b/a_fold"/>
</dbReference>
<dbReference type="InterPro" id="IPR009080">
    <property type="entry name" value="tRNAsynth_Ia_anticodon-bd"/>
</dbReference>
<dbReference type="InterPro" id="IPR009008">
    <property type="entry name" value="Val/Leu/Ile-tRNA-synth_edit"/>
</dbReference>
<dbReference type="NCBIfam" id="TIGR00396">
    <property type="entry name" value="leuS_bact"/>
    <property type="match status" value="1"/>
</dbReference>
<dbReference type="PANTHER" id="PTHR43740:SF2">
    <property type="entry name" value="LEUCINE--TRNA LIGASE, MITOCHONDRIAL"/>
    <property type="match status" value="1"/>
</dbReference>
<dbReference type="PANTHER" id="PTHR43740">
    <property type="entry name" value="LEUCYL-TRNA SYNTHETASE"/>
    <property type="match status" value="1"/>
</dbReference>
<dbReference type="Pfam" id="PF08264">
    <property type="entry name" value="Anticodon_1"/>
    <property type="match status" value="1"/>
</dbReference>
<dbReference type="Pfam" id="PF00133">
    <property type="entry name" value="tRNA-synt_1"/>
    <property type="match status" value="1"/>
</dbReference>
<dbReference type="Pfam" id="PF13603">
    <property type="entry name" value="tRNA-synt_1_2"/>
    <property type="match status" value="1"/>
</dbReference>
<dbReference type="Pfam" id="PF09334">
    <property type="entry name" value="tRNA-synt_1g"/>
    <property type="match status" value="1"/>
</dbReference>
<dbReference type="PRINTS" id="PR00985">
    <property type="entry name" value="TRNASYNTHLEU"/>
</dbReference>
<dbReference type="SUPFAM" id="SSF47323">
    <property type="entry name" value="Anticodon-binding domain of a subclass of class I aminoacyl-tRNA synthetases"/>
    <property type="match status" value="1"/>
</dbReference>
<dbReference type="SUPFAM" id="SSF52374">
    <property type="entry name" value="Nucleotidylyl transferase"/>
    <property type="match status" value="1"/>
</dbReference>
<dbReference type="SUPFAM" id="SSF50677">
    <property type="entry name" value="ValRS/IleRS/LeuRS editing domain"/>
    <property type="match status" value="1"/>
</dbReference>
<dbReference type="PROSITE" id="PS00178">
    <property type="entry name" value="AA_TRNA_LIGASE_I"/>
    <property type="match status" value="1"/>
</dbReference>
<evidence type="ECO:0000255" key="1">
    <source>
        <dbReference type="HAMAP-Rule" id="MF_00049"/>
    </source>
</evidence>
<sequence>MQEHYEPDALERQAQTWWDEHQTFRAREDAPGEPFYCLSMFPYPSGRLHMGHVRNYTIGDVISRYQRMQGRNVLQPMGWDAFGLPAENAAIKHLVPPAKWTYENIAYMRGQLQRLGFGYDWDRELATCRPEYYRWEQWLFTRLVKKGLAYKKTAMVNWDPVDQTVLANEQVIDGKGWRSGAPVERREIPQWFLRITDYAEELLKGLDGLEGWPEQVRTMQRNWIGRSEGVELEFEVPGEAPLTVYTTRPDTLMGVSYVGVAPEHPLAARAAEGDGKLAAFIEACRHTKVSEADMATLEKKGMDTGLKAVHPVTGEPVPVWVANFVLMEYGTGAVMAVPAHDQRDWEFARQYGLPVRQVILPAEEGVAVDLDQAAFTDKGVLIESAQFNGLSSAQAFDAIADFLEKQHKGRRRVNYRLRDWGVSRQRYWGCPIPIINCPDCGPVPVPEEQLPVVLPEDVAFDGVGSPIKRMPEFIDTTCPECGGKAERETDTFDTFFESSWYYARYTCKDADGAMLDERARHWLPVDQYIGGIEHAVLHLLYARFFHKLMRDEGLVDGDEPFTRLLTQGMVLKDGAKMSKSKGNTVDPEALIERYGADTVRLFMMFAAPPELSLEWSDSGVEGAYRFLKRLWKQVHDHVQGGAAPALDKAALNADQQALRRKLHQTLAKVSDDIGRRTTFNTAIAACMELMNELGRFEDKSGQGRAVMQEALETTVLMLSPIVPHIAHALWSELGREGAAVDQPWPVVDESALESDTVELVVQVNGKLRAQIQVPAAAARAAIEEAALADENVQRHIEGKTVVKMVVVPGRLVNVVVK</sequence>
<comment type="catalytic activity">
    <reaction evidence="1">
        <text>tRNA(Leu) + L-leucine + ATP = L-leucyl-tRNA(Leu) + AMP + diphosphate</text>
        <dbReference type="Rhea" id="RHEA:11688"/>
        <dbReference type="Rhea" id="RHEA-COMP:9613"/>
        <dbReference type="Rhea" id="RHEA-COMP:9622"/>
        <dbReference type="ChEBI" id="CHEBI:30616"/>
        <dbReference type="ChEBI" id="CHEBI:33019"/>
        <dbReference type="ChEBI" id="CHEBI:57427"/>
        <dbReference type="ChEBI" id="CHEBI:78442"/>
        <dbReference type="ChEBI" id="CHEBI:78494"/>
        <dbReference type="ChEBI" id="CHEBI:456215"/>
        <dbReference type="EC" id="6.1.1.4"/>
    </reaction>
</comment>
<comment type="subcellular location">
    <subcellularLocation>
        <location evidence="1">Cytoplasm</location>
    </subcellularLocation>
</comment>
<comment type="similarity">
    <text evidence="1">Belongs to the class-I aminoacyl-tRNA synthetase family.</text>
</comment>
<feature type="chain" id="PRO_1000199231" description="Leucine--tRNA ligase">
    <location>
        <begin position="1"/>
        <end position="817"/>
    </location>
</feature>
<feature type="short sequence motif" description="'HIGH' region">
    <location>
        <begin position="42"/>
        <end position="52"/>
    </location>
</feature>
<feature type="short sequence motif" description="'KMSKS' region">
    <location>
        <begin position="576"/>
        <end position="580"/>
    </location>
</feature>
<feature type="binding site" evidence="1">
    <location>
        <position position="579"/>
    </location>
    <ligand>
        <name>ATP</name>
        <dbReference type="ChEBI" id="CHEBI:30616"/>
    </ligand>
</feature>
<accession>B8GV13</accession>
<protein>
    <recommendedName>
        <fullName evidence="1">Leucine--tRNA ligase</fullName>
        <ecNumber evidence="1">6.1.1.4</ecNumber>
    </recommendedName>
    <alternativeName>
        <fullName evidence="1">Leucyl-tRNA synthetase</fullName>
        <shortName evidence="1">LeuRS</shortName>
    </alternativeName>
</protein>
<reference key="1">
    <citation type="journal article" date="2011" name="Stand. Genomic Sci.">
        <title>Complete genome sequence of 'Thioalkalivibrio sulfidophilus' HL-EbGr7.</title>
        <authorList>
            <person name="Muyzer G."/>
            <person name="Sorokin D.Y."/>
            <person name="Mavromatis K."/>
            <person name="Lapidus A."/>
            <person name="Clum A."/>
            <person name="Ivanova N."/>
            <person name="Pati A."/>
            <person name="d'Haeseleer P."/>
            <person name="Woyke T."/>
            <person name="Kyrpides N.C."/>
        </authorList>
    </citation>
    <scope>NUCLEOTIDE SEQUENCE [LARGE SCALE GENOMIC DNA]</scope>
    <source>
        <strain>HL-EbGR7</strain>
    </source>
</reference>
<organism>
    <name type="scientific">Thioalkalivibrio sulfidiphilus (strain HL-EbGR7)</name>
    <dbReference type="NCBI Taxonomy" id="396588"/>
    <lineage>
        <taxon>Bacteria</taxon>
        <taxon>Pseudomonadati</taxon>
        <taxon>Pseudomonadota</taxon>
        <taxon>Gammaproteobacteria</taxon>
        <taxon>Chromatiales</taxon>
        <taxon>Ectothiorhodospiraceae</taxon>
        <taxon>Thioalkalivibrio</taxon>
    </lineage>
</organism>
<name>SYL_THISH</name>
<proteinExistence type="inferred from homology"/>
<gene>
    <name evidence="1" type="primary">leuS</name>
    <name type="ordered locus">Tgr7_2279</name>
</gene>